<protein>
    <recommendedName>
        <fullName evidence="1">Large ribosomal subunit protein bL35</fullName>
    </recommendedName>
    <alternativeName>
        <fullName evidence="3">50S ribosomal protein L35</fullName>
    </alternativeName>
</protein>
<reference key="1">
    <citation type="journal article" date="2004" name="Environ. Microbiol.">
        <title>The genome of Desulfotalea psychrophila, a sulfate-reducing bacterium from permanently cold Arctic sediments.</title>
        <authorList>
            <person name="Rabus R."/>
            <person name="Ruepp A."/>
            <person name="Frickey T."/>
            <person name="Rattei T."/>
            <person name="Fartmann B."/>
            <person name="Stark M."/>
            <person name="Bauer M."/>
            <person name="Zibat A."/>
            <person name="Lombardot T."/>
            <person name="Becker I."/>
            <person name="Amann J."/>
            <person name="Gellner K."/>
            <person name="Teeling H."/>
            <person name="Leuschner W.D."/>
            <person name="Gloeckner F.-O."/>
            <person name="Lupas A.N."/>
            <person name="Amann R."/>
            <person name="Klenk H.-P."/>
        </authorList>
    </citation>
    <scope>NUCLEOTIDE SEQUENCE [LARGE SCALE GENOMIC DNA]</scope>
    <source>
        <strain>DSM 12343 / LSv54</strain>
    </source>
</reference>
<proteinExistence type="inferred from homology"/>
<feature type="chain" id="PRO_0000258671" description="Large ribosomal subunit protein bL35">
    <location>
        <begin position="1"/>
        <end position="65"/>
    </location>
</feature>
<feature type="region of interest" description="Disordered" evidence="2">
    <location>
        <begin position="1"/>
        <end position="29"/>
    </location>
</feature>
<feature type="compositionally biased region" description="Basic residues" evidence="2">
    <location>
        <begin position="10"/>
        <end position="26"/>
    </location>
</feature>
<keyword id="KW-1185">Reference proteome</keyword>
<keyword id="KW-0687">Ribonucleoprotein</keyword>
<keyword id="KW-0689">Ribosomal protein</keyword>
<gene>
    <name evidence="1" type="primary">rpmI</name>
    <name type="ordered locus">DP1426</name>
</gene>
<organism>
    <name type="scientific">Desulfotalea psychrophila (strain LSv54 / DSM 12343)</name>
    <dbReference type="NCBI Taxonomy" id="177439"/>
    <lineage>
        <taxon>Bacteria</taxon>
        <taxon>Pseudomonadati</taxon>
        <taxon>Thermodesulfobacteriota</taxon>
        <taxon>Desulfobulbia</taxon>
        <taxon>Desulfobulbales</taxon>
        <taxon>Desulfocapsaceae</taxon>
        <taxon>Desulfotalea</taxon>
    </lineage>
</organism>
<evidence type="ECO:0000255" key="1">
    <source>
        <dbReference type="HAMAP-Rule" id="MF_00514"/>
    </source>
</evidence>
<evidence type="ECO:0000256" key="2">
    <source>
        <dbReference type="SAM" id="MobiDB-lite"/>
    </source>
</evidence>
<evidence type="ECO:0000305" key="3"/>
<name>RL35_DESPS</name>
<sequence>MPKMKTNRGAAKRFKKTGSGRIKRGKAFTSHILTKKSTKRKRSLRQADLVSSADVKNIKKILPYM</sequence>
<dbReference type="EMBL" id="CR522870">
    <property type="protein sequence ID" value="CAG36155.1"/>
    <property type="status" value="ALT_INIT"/>
    <property type="molecule type" value="Genomic_DNA"/>
</dbReference>
<dbReference type="RefSeq" id="WP_041277749.1">
    <property type="nucleotide sequence ID" value="NC_006138.1"/>
</dbReference>
<dbReference type="SMR" id="Q6ANB9"/>
<dbReference type="STRING" id="177439.DP1426"/>
<dbReference type="KEGG" id="dps:DP1426"/>
<dbReference type="eggNOG" id="COG0291">
    <property type="taxonomic scope" value="Bacteria"/>
</dbReference>
<dbReference type="HOGENOM" id="CLU_169643_4_3_7"/>
<dbReference type="OrthoDB" id="9804851at2"/>
<dbReference type="Proteomes" id="UP000000602">
    <property type="component" value="Chromosome"/>
</dbReference>
<dbReference type="GO" id="GO:0022625">
    <property type="term" value="C:cytosolic large ribosomal subunit"/>
    <property type="evidence" value="ECO:0007669"/>
    <property type="project" value="TreeGrafter"/>
</dbReference>
<dbReference type="GO" id="GO:0003735">
    <property type="term" value="F:structural constituent of ribosome"/>
    <property type="evidence" value="ECO:0007669"/>
    <property type="project" value="InterPro"/>
</dbReference>
<dbReference type="GO" id="GO:0006412">
    <property type="term" value="P:translation"/>
    <property type="evidence" value="ECO:0007669"/>
    <property type="project" value="UniProtKB-UniRule"/>
</dbReference>
<dbReference type="FunFam" id="4.10.410.60:FF:000001">
    <property type="entry name" value="50S ribosomal protein L35"/>
    <property type="match status" value="1"/>
</dbReference>
<dbReference type="Gene3D" id="4.10.410.60">
    <property type="match status" value="1"/>
</dbReference>
<dbReference type="HAMAP" id="MF_00514">
    <property type="entry name" value="Ribosomal_bL35"/>
    <property type="match status" value="1"/>
</dbReference>
<dbReference type="InterPro" id="IPR001706">
    <property type="entry name" value="Ribosomal_bL35"/>
</dbReference>
<dbReference type="InterPro" id="IPR021137">
    <property type="entry name" value="Ribosomal_bL35-like"/>
</dbReference>
<dbReference type="InterPro" id="IPR018265">
    <property type="entry name" value="Ribosomal_bL35_CS"/>
</dbReference>
<dbReference type="InterPro" id="IPR037229">
    <property type="entry name" value="Ribosomal_bL35_sf"/>
</dbReference>
<dbReference type="NCBIfam" id="TIGR00001">
    <property type="entry name" value="rpmI_bact"/>
    <property type="match status" value="1"/>
</dbReference>
<dbReference type="PANTHER" id="PTHR33343">
    <property type="entry name" value="54S RIBOSOMAL PROTEIN BL35M"/>
    <property type="match status" value="1"/>
</dbReference>
<dbReference type="PANTHER" id="PTHR33343:SF1">
    <property type="entry name" value="LARGE RIBOSOMAL SUBUNIT PROTEIN BL35M"/>
    <property type="match status" value="1"/>
</dbReference>
<dbReference type="Pfam" id="PF01632">
    <property type="entry name" value="Ribosomal_L35p"/>
    <property type="match status" value="1"/>
</dbReference>
<dbReference type="PRINTS" id="PR00064">
    <property type="entry name" value="RIBOSOMALL35"/>
</dbReference>
<dbReference type="SUPFAM" id="SSF143034">
    <property type="entry name" value="L35p-like"/>
    <property type="match status" value="1"/>
</dbReference>
<dbReference type="PROSITE" id="PS00936">
    <property type="entry name" value="RIBOSOMAL_L35"/>
    <property type="match status" value="1"/>
</dbReference>
<accession>Q6ANB9</accession>
<comment type="similarity">
    <text evidence="1">Belongs to the bacterial ribosomal protein bL35 family.</text>
</comment>
<comment type="sequence caution" evidence="3">
    <conflict type="erroneous initiation">
        <sequence resource="EMBL-CDS" id="CAG36155"/>
    </conflict>
</comment>